<evidence type="ECO:0000255" key="1">
    <source>
        <dbReference type="HAMAP-Rule" id="MF_00917"/>
    </source>
</evidence>
<evidence type="ECO:0000255" key="2">
    <source>
        <dbReference type="PROSITE-ProRule" id="PRU01266"/>
    </source>
</evidence>
<proteinExistence type="inferred from homology"/>
<keyword id="KW-0004">4Fe-4S</keyword>
<keyword id="KW-0408">Iron</keyword>
<keyword id="KW-0411">Iron-sulfur</keyword>
<keyword id="KW-0456">Lyase</keyword>
<keyword id="KW-0460">Magnesium</keyword>
<keyword id="KW-0479">Metal-binding</keyword>
<keyword id="KW-0671">Queuosine biosynthesis</keyword>
<keyword id="KW-1185">Reference proteome</keyword>
<keyword id="KW-0949">S-adenosyl-L-methionine</keyword>
<gene>
    <name evidence="1" type="primary">queE</name>
    <name type="ordered locus">Rru_A1959</name>
</gene>
<feature type="chain" id="PRO_0000416212" description="7-carboxy-7-deazaguanine synthase">
    <location>
        <begin position="1"/>
        <end position="235"/>
    </location>
</feature>
<feature type="domain" description="Radical SAM core" evidence="2">
    <location>
        <begin position="33"/>
        <end position="235"/>
    </location>
</feature>
<feature type="binding site" evidence="1">
    <location>
        <begin position="27"/>
        <end position="29"/>
    </location>
    <ligand>
        <name>substrate</name>
    </ligand>
</feature>
<feature type="binding site" evidence="1">
    <location>
        <position position="42"/>
    </location>
    <ligand>
        <name>substrate</name>
    </ligand>
</feature>
<feature type="binding site" evidence="1">
    <location>
        <position position="46"/>
    </location>
    <ligand>
        <name>[4Fe-4S] cluster</name>
        <dbReference type="ChEBI" id="CHEBI:49883"/>
        <note>4Fe-4S-S-AdoMet</note>
    </ligand>
</feature>
<feature type="binding site" evidence="1">
    <location>
        <position position="50"/>
    </location>
    <ligand>
        <name>[4Fe-4S] cluster</name>
        <dbReference type="ChEBI" id="CHEBI:49883"/>
        <note>4Fe-4S-S-AdoMet</note>
    </ligand>
</feature>
<feature type="binding site" evidence="1">
    <location>
        <position position="53"/>
    </location>
    <ligand>
        <name>[4Fe-4S] cluster</name>
        <dbReference type="ChEBI" id="CHEBI:49883"/>
        <note>4Fe-4S-S-AdoMet</note>
    </ligand>
</feature>
<feature type="binding site" evidence="1">
    <location>
        <position position="55"/>
    </location>
    <ligand>
        <name>Mg(2+)</name>
        <dbReference type="ChEBI" id="CHEBI:18420"/>
    </ligand>
</feature>
<feature type="binding site" evidence="1">
    <location>
        <position position="87"/>
    </location>
    <ligand>
        <name>substrate</name>
    </ligand>
</feature>
<feature type="binding site" evidence="1">
    <location>
        <position position="89"/>
    </location>
    <ligand>
        <name>S-adenosyl-L-methionine</name>
        <dbReference type="ChEBI" id="CHEBI:59789"/>
    </ligand>
</feature>
<feature type="binding site" evidence="1">
    <location>
        <begin position="133"/>
        <end position="135"/>
    </location>
    <ligand>
        <name>S-adenosyl-L-methionine</name>
        <dbReference type="ChEBI" id="CHEBI:59789"/>
    </ligand>
</feature>
<comment type="function">
    <text evidence="1">Catalyzes the complex heterocyclic radical-mediated conversion of 6-carboxy-5,6,7,8-tetrahydropterin (CPH4) to 7-carboxy-7-deazaguanine (CDG), a step common to the biosynthetic pathways of all 7-deazapurine-containing compounds.</text>
</comment>
<comment type="catalytic activity">
    <reaction evidence="1">
        <text>6-carboxy-5,6,7,8-tetrahydropterin + H(+) = 7-carboxy-7-deazaguanine + NH4(+)</text>
        <dbReference type="Rhea" id="RHEA:27974"/>
        <dbReference type="ChEBI" id="CHEBI:15378"/>
        <dbReference type="ChEBI" id="CHEBI:28938"/>
        <dbReference type="ChEBI" id="CHEBI:61032"/>
        <dbReference type="ChEBI" id="CHEBI:61036"/>
        <dbReference type="EC" id="4.3.99.3"/>
    </reaction>
</comment>
<comment type="cofactor">
    <cofactor evidence="1">
        <name>[4Fe-4S] cluster</name>
        <dbReference type="ChEBI" id="CHEBI:49883"/>
    </cofactor>
    <text evidence="1">Binds 1 [4Fe-4S] cluster. The cluster is coordinated with 3 cysteines and an exchangeable S-adenosyl-L-methionine.</text>
</comment>
<comment type="cofactor">
    <cofactor evidence="1">
        <name>S-adenosyl-L-methionine</name>
        <dbReference type="ChEBI" id="CHEBI:59789"/>
    </cofactor>
    <text evidence="1">Binds 1 S-adenosyl-L-methionine per subunit.</text>
</comment>
<comment type="cofactor">
    <cofactor evidence="1">
        <name>Mg(2+)</name>
        <dbReference type="ChEBI" id="CHEBI:18420"/>
    </cofactor>
</comment>
<comment type="pathway">
    <text evidence="1">Purine metabolism; 7-cyano-7-deazaguanine biosynthesis.</text>
</comment>
<comment type="subunit">
    <text evidence="1">Homodimer.</text>
</comment>
<comment type="similarity">
    <text evidence="1">Belongs to the radical SAM superfamily. 7-carboxy-7-deazaguanine synthase family.</text>
</comment>
<name>QUEE_RHORT</name>
<dbReference type="EC" id="4.3.99.3" evidence="1"/>
<dbReference type="EMBL" id="CP000230">
    <property type="protein sequence ID" value="ABC22759.1"/>
    <property type="molecule type" value="Genomic_DNA"/>
</dbReference>
<dbReference type="RefSeq" id="WP_011389712.1">
    <property type="nucleotide sequence ID" value="NC_007643.1"/>
</dbReference>
<dbReference type="RefSeq" id="YP_427046.1">
    <property type="nucleotide sequence ID" value="NC_007643.1"/>
</dbReference>
<dbReference type="SMR" id="Q2RSY6"/>
<dbReference type="STRING" id="269796.Rru_A1959"/>
<dbReference type="EnsemblBacteria" id="ABC22759">
    <property type="protein sequence ID" value="ABC22759"/>
    <property type="gene ID" value="Rru_A1959"/>
</dbReference>
<dbReference type="KEGG" id="rru:Rru_A1959"/>
<dbReference type="PATRIC" id="fig|269796.9.peg.2043"/>
<dbReference type="eggNOG" id="COG0602">
    <property type="taxonomic scope" value="Bacteria"/>
</dbReference>
<dbReference type="HOGENOM" id="CLU_066739_2_3_5"/>
<dbReference type="PhylomeDB" id="Q2RSY6"/>
<dbReference type="UniPathway" id="UPA00391"/>
<dbReference type="Proteomes" id="UP000001929">
    <property type="component" value="Chromosome"/>
</dbReference>
<dbReference type="GO" id="GO:0051539">
    <property type="term" value="F:4 iron, 4 sulfur cluster binding"/>
    <property type="evidence" value="ECO:0007669"/>
    <property type="project" value="UniProtKB-UniRule"/>
</dbReference>
<dbReference type="GO" id="GO:0016840">
    <property type="term" value="F:carbon-nitrogen lyase activity"/>
    <property type="evidence" value="ECO:0007669"/>
    <property type="project" value="UniProtKB-UniRule"/>
</dbReference>
<dbReference type="GO" id="GO:0000287">
    <property type="term" value="F:magnesium ion binding"/>
    <property type="evidence" value="ECO:0007669"/>
    <property type="project" value="UniProtKB-UniRule"/>
</dbReference>
<dbReference type="GO" id="GO:1904047">
    <property type="term" value="F:S-adenosyl-L-methionine binding"/>
    <property type="evidence" value="ECO:0007669"/>
    <property type="project" value="UniProtKB-UniRule"/>
</dbReference>
<dbReference type="GO" id="GO:0008616">
    <property type="term" value="P:queuosine biosynthetic process"/>
    <property type="evidence" value="ECO:0007669"/>
    <property type="project" value="UniProtKB-UniRule"/>
</dbReference>
<dbReference type="CDD" id="cd01335">
    <property type="entry name" value="Radical_SAM"/>
    <property type="match status" value="1"/>
</dbReference>
<dbReference type="Gene3D" id="3.20.20.70">
    <property type="entry name" value="Aldolase class I"/>
    <property type="match status" value="1"/>
</dbReference>
<dbReference type="HAMAP" id="MF_00917">
    <property type="entry name" value="QueE"/>
    <property type="match status" value="1"/>
</dbReference>
<dbReference type="InterPro" id="IPR024924">
    <property type="entry name" value="7-CO-7-deazaguanine_synth-like"/>
</dbReference>
<dbReference type="InterPro" id="IPR013785">
    <property type="entry name" value="Aldolase_TIM"/>
</dbReference>
<dbReference type="InterPro" id="IPR007197">
    <property type="entry name" value="rSAM"/>
</dbReference>
<dbReference type="PANTHER" id="PTHR42836">
    <property type="entry name" value="7-CARBOXY-7-DEAZAGUANINE SYNTHASE"/>
    <property type="match status" value="1"/>
</dbReference>
<dbReference type="PANTHER" id="PTHR42836:SF1">
    <property type="entry name" value="7-CARBOXY-7-DEAZAGUANINE SYNTHASE"/>
    <property type="match status" value="1"/>
</dbReference>
<dbReference type="Pfam" id="PF04055">
    <property type="entry name" value="Radical_SAM"/>
    <property type="match status" value="1"/>
</dbReference>
<dbReference type="PIRSF" id="PIRSF000370">
    <property type="entry name" value="QueE"/>
    <property type="match status" value="1"/>
</dbReference>
<dbReference type="SFLD" id="SFLDS00029">
    <property type="entry name" value="Radical_SAM"/>
    <property type="match status" value="1"/>
</dbReference>
<dbReference type="SUPFAM" id="SSF102114">
    <property type="entry name" value="Radical SAM enzymes"/>
    <property type="match status" value="1"/>
</dbReference>
<dbReference type="PROSITE" id="PS51918">
    <property type="entry name" value="RADICAL_SAM"/>
    <property type="match status" value="1"/>
</dbReference>
<organism>
    <name type="scientific">Rhodospirillum rubrum (strain ATCC 11170 / ATH 1.1.1 / DSM 467 / LMG 4362 / NCIMB 8255 / S1)</name>
    <dbReference type="NCBI Taxonomy" id="269796"/>
    <lineage>
        <taxon>Bacteria</taxon>
        <taxon>Pseudomonadati</taxon>
        <taxon>Pseudomonadota</taxon>
        <taxon>Alphaproteobacteria</taxon>
        <taxon>Rhodospirillales</taxon>
        <taxon>Rhodospirillaceae</taxon>
        <taxon>Rhodospirillum</taxon>
    </lineage>
</organism>
<accession>Q2RSY6</accession>
<reference key="1">
    <citation type="journal article" date="2011" name="Stand. Genomic Sci.">
        <title>Complete genome sequence of Rhodospirillum rubrum type strain (S1).</title>
        <authorList>
            <person name="Munk A.C."/>
            <person name="Copeland A."/>
            <person name="Lucas S."/>
            <person name="Lapidus A."/>
            <person name="Del Rio T.G."/>
            <person name="Barry K."/>
            <person name="Detter J.C."/>
            <person name="Hammon N."/>
            <person name="Israni S."/>
            <person name="Pitluck S."/>
            <person name="Brettin T."/>
            <person name="Bruce D."/>
            <person name="Han C."/>
            <person name="Tapia R."/>
            <person name="Gilna P."/>
            <person name="Schmutz J."/>
            <person name="Larimer F."/>
            <person name="Land M."/>
            <person name="Kyrpides N.C."/>
            <person name="Mavromatis K."/>
            <person name="Richardson P."/>
            <person name="Rohde M."/>
            <person name="Goeker M."/>
            <person name="Klenk H.P."/>
            <person name="Zhang Y."/>
            <person name="Roberts G.P."/>
            <person name="Reslewic S."/>
            <person name="Schwartz D.C."/>
        </authorList>
    </citation>
    <scope>NUCLEOTIDE SEQUENCE [LARGE SCALE GENOMIC DNA]</scope>
    <source>
        <strain>ATCC 11170 / ATH 1.1.1 / DSM 467 / LMG 4362 / NCIMB 8255 / S1</strain>
    </source>
</reference>
<sequence>MFGRNPARGPDPGDGESLWIQEVFYTLQGEGPFSGQPSVFVRTAGCNLRCAWCDTDFESSAWKPPLPELLAVIDSRRPRVCDLVVLTGGEPLRQEVGPLVRALLARGLRVQIETNGTLWRDLPFGPGLSIVCSPKTRTLDPQLVPRIDAFKYVIAAGETDPTDGLPALSTQHPGRAERLFRPPPGVPVFVMPRDDHGTPARPGRGEDDNLAEAAASALRFGYRLCVQVHKILKIA</sequence>
<protein>
    <recommendedName>
        <fullName evidence="1">7-carboxy-7-deazaguanine synthase</fullName>
        <shortName evidence="1">CDG synthase</shortName>
        <ecNumber evidence="1">4.3.99.3</ecNumber>
    </recommendedName>
    <alternativeName>
        <fullName evidence="1">Queuosine biosynthesis protein QueE</fullName>
    </alternativeName>
</protein>